<evidence type="ECO:0000255" key="1">
    <source>
        <dbReference type="HAMAP-Rule" id="MF_01382"/>
    </source>
</evidence>
<evidence type="ECO:0000256" key="2">
    <source>
        <dbReference type="SAM" id="MobiDB-lite"/>
    </source>
</evidence>
<feature type="chain" id="PRO_1000087315" description="Protein translocase subunit SecA">
    <location>
        <begin position="1"/>
        <end position="873"/>
    </location>
</feature>
<feature type="region of interest" description="Disordered" evidence="2">
    <location>
        <begin position="835"/>
        <end position="873"/>
    </location>
</feature>
<feature type="compositionally biased region" description="Basic and acidic residues" evidence="2">
    <location>
        <begin position="835"/>
        <end position="856"/>
    </location>
</feature>
<feature type="compositionally biased region" description="Basic residues" evidence="2">
    <location>
        <begin position="863"/>
        <end position="873"/>
    </location>
</feature>
<feature type="binding site" evidence="1">
    <location>
        <position position="85"/>
    </location>
    <ligand>
        <name>ATP</name>
        <dbReference type="ChEBI" id="CHEBI:30616"/>
    </ligand>
</feature>
<feature type="binding site" evidence="1">
    <location>
        <begin position="103"/>
        <end position="107"/>
    </location>
    <ligand>
        <name>ATP</name>
        <dbReference type="ChEBI" id="CHEBI:30616"/>
    </ligand>
</feature>
<feature type="binding site" evidence="1">
    <location>
        <position position="492"/>
    </location>
    <ligand>
        <name>ATP</name>
        <dbReference type="ChEBI" id="CHEBI:30616"/>
    </ligand>
</feature>
<feature type="binding site" evidence="1">
    <location>
        <position position="857"/>
    </location>
    <ligand>
        <name>Zn(2+)</name>
        <dbReference type="ChEBI" id="CHEBI:29105"/>
    </ligand>
</feature>
<feature type="binding site" evidence="1">
    <location>
        <position position="859"/>
    </location>
    <ligand>
        <name>Zn(2+)</name>
        <dbReference type="ChEBI" id="CHEBI:29105"/>
    </ligand>
</feature>
<feature type="binding site" evidence="1">
    <location>
        <position position="868"/>
    </location>
    <ligand>
        <name>Zn(2+)</name>
        <dbReference type="ChEBI" id="CHEBI:29105"/>
    </ligand>
</feature>
<feature type="binding site" evidence="1">
    <location>
        <position position="869"/>
    </location>
    <ligand>
        <name>Zn(2+)</name>
        <dbReference type="ChEBI" id="CHEBI:29105"/>
    </ligand>
</feature>
<accession>A4J927</accession>
<gene>
    <name evidence="1" type="primary">secA</name>
    <name type="ordered locus">Dred_3078</name>
</gene>
<proteinExistence type="inferred from homology"/>
<sequence length="873" mass="99546">MLNFFKNLFDDNAREVKKLQRVVEEINGLEEKIAKLTDEELQGKTAEFKQLLENGKTLNDILPEAFAVCREASKRVLGMRHYDVQLIGGMVLHQGRIAEMRTGEGKTLVATLPVYLNALSGKGVHVITVNDYLATRDSEWMGKLYRFLGLSVGLIVHGIKPEDRRLAYNADITYGTNNEFGFDYLRDNMSLHPEQLVQRELNYSIVDEVDSILIDEARTPLIISGVADKPTHLYYTMAKIVPKLVREVDYTVDEKAHNVLLTEEGVSKAEKLLGIENLYDEANMEINHHLNQSLKAHGLMHRDRDYVVRDGEVVIVDEFTGRLMFGRRYSDGLHQAIEAKEGVKIEKESQTLATITFQNYFRMYNKIAGMTGTALTEEEEFRKIYGLDVVVIPTNKPTIRKDLADLVYKTEMAKFRAVVEDVVQRHETGQPVLVGTISIAKSELLSSLLKRRGVPHQVLNAKHHDKEAEIIAQAGRFKAVTIATNMAGRGTDILLGGNPEVFARAEMRKKGITEENAPAEYQQIVEKYMALCNEERAKVMEKGGLHIIGTERHESRRIDNQLRGRAGRQGDPGSSQFYIALEDDLMRLFGSDNIAGLMDRLGMEEDVPIENALITKSIETAQKRVESRNFSIRKHVLDYDDVMNQQREVIYAQRRKVLTGHNLAENIKDTITAVVERSVDMYCPEGVHEEEWDLAGLLEYAEGLYMPNHNIEPAELEEMGRQGLKDELLERTMSLYQKREEELGAETLREIERIVLLRLVDEKWMDHLDAMDQLREGIGLRAYGSKDPVIEYKFEAYEMFNNMIANIQDDVVRYIFRVNVAAPQERTQRQVVENRYAEEEGKQPIRKENQIGRNDDCPCGSGKKYKKCCGKNA</sequence>
<dbReference type="EC" id="7.4.2.8" evidence="1"/>
<dbReference type="EMBL" id="CP000612">
    <property type="protein sequence ID" value="ABO51580.1"/>
    <property type="molecule type" value="Genomic_DNA"/>
</dbReference>
<dbReference type="RefSeq" id="WP_011879369.1">
    <property type="nucleotide sequence ID" value="NC_009253.1"/>
</dbReference>
<dbReference type="SMR" id="A4J927"/>
<dbReference type="STRING" id="349161.Dred_3078"/>
<dbReference type="KEGG" id="drm:Dred_3078"/>
<dbReference type="eggNOG" id="COG0653">
    <property type="taxonomic scope" value="Bacteria"/>
</dbReference>
<dbReference type="HOGENOM" id="CLU_005314_3_0_9"/>
<dbReference type="OrthoDB" id="9805579at2"/>
<dbReference type="Proteomes" id="UP000001556">
    <property type="component" value="Chromosome"/>
</dbReference>
<dbReference type="GO" id="GO:0031522">
    <property type="term" value="C:cell envelope Sec protein transport complex"/>
    <property type="evidence" value="ECO:0007669"/>
    <property type="project" value="TreeGrafter"/>
</dbReference>
<dbReference type="GO" id="GO:0005829">
    <property type="term" value="C:cytosol"/>
    <property type="evidence" value="ECO:0007669"/>
    <property type="project" value="TreeGrafter"/>
</dbReference>
<dbReference type="GO" id="GO:0005886">
    <property type="term" value="C:plasma membrane"/>
    <property type="evidence" value="ECO:0007669"/>
    <property type="project" value="UniProtKB-SubCell"/>
</dbReference>
<dbReference type="GO" id="GO:0005524">
    <property type="term" value="F:ATP binding"/>
    <property type="evidence" value="ECO:0007669"/>
    <property type="project" value="UniProtKB-UniRule"/>
</dbReference>
<dbReference type="GO" id="GO:0046872">
    <property type="term" value="F:metal ion binding"/>
    <property type="evidence" value="ECO:0007669"/>
    <property type="project" value="UniProtKB-KW"/>
</dbReference>
<dbReference type="GO" id="GO:0008564">
    <property type="term" value="F:protein-exporting ATPase activity"/>
    <property type="evidence" value="ECO:0007669"/>
    <property type="project" value="UniProtKB-EC"/>
</dbReference>
<dbReference type="GO" id="GO:0065002">
    <property type="term" value="P:intracellular protein transmembrane transport"/>
    <property type="evidence" value="ECO:0007669"/>
    <property type="project" value="UniProtKB-UniRule"/>
</dbReference>
<dbReference type="GO" id="GO:0017038">
    <property type="term" value="P:protein import"/>
    <property type="evidence" value="ECO:0007669"/>
    <property type="project" value="InterPro"/>
</dbReference>
<dbReference type="GO" id="GO:0006605">
    <property type="term" value="P:protein targeting"/>
    <property type="evidence" value="ECO:0007669"/>
    <property type="project" value="UniProtKB-UniRule"/>
</dbReference>
<dbReference type="GO" id="GO:0043952">
    <property type="term" value="P:protein transport by the Sec complex"/>
    <property type="evidence" value="ECO:0007669"/>
    <property type="project" value="TreeGrafter"/>
</dbReference>
<dbReference type="CDD" id="cd17928">
    <property type="entry name" value="DEXDc_SecA"/>
    <property type="match status" value="1"/>
</dbReference>
<dbReference type="CDD" id="cd18803">
    <property type="entry name" value="SF2_C_secA"/>
    <property type="match status" value="1"/>
</dbReference>
<dbReference type="FunFam" id="1.10.3060.10:FF:000002">
    <property type="entry name" value="Preprotein translocase subunit SecA"/>
    <property type="match status" value="1"/>
</dbReference>
<dbReference type="FunFam" id="3.40.50.300:FF:000113">
    <property type="entry name" value="Preprotein translocase subunit SecA"/>
    <property type="match status" value="1"/>
</dbReference>
<dbReference type="FunFam" id="3.40.50.300:FF:000334">
    <property type="entry name" value="Protein translocase subunit SecA"/>
    <property type="match status" value="1"/>
</dbReference>
<dbReference type="FunFam" id="3.90.1440.10:FF:000002">
    <property type="entry name" value="Protein translocase subunit SecA"/>
    <property type="match status" value="1"/>
</dbReference>
<dbReference type="Gene3D" id="1.10.3060.10">
    <property type="entry name" value="Helical scaffold and wing domains of SecA"/>
    <property type="match status" value="1"/>
</dbReference>
<dbReference type="Gene3D" id="3.40.50.300">
    <property type="entry name" value="P-loop containing nucleotide triphosphate hydrolases"/>
    <property type="match status" value="2"/>
</dbReference>
<dbReference type="Gene3D" id="3.90.1440.10">
    <property type="entry name" value="SecA, preprotein cross-linking domain"/>
    <property type="match status" value="1"/>
</dbReference>
<dbReference type="HAMAP" id="MF_01382">
    <property type="entry name" value="SecA"/>
    <property type="match status" value="1"/>
</dbReference>
<dbReference type="InterPro" id="IPR014001">
    <property type="entry name" value="Helicase_ATP-bd"/>
</dbReference>
<dbReference type="InterPro" id="IPR027417">
    <property type="entry name" value="P-loop_NTPase"/>
</dbReference>
<dbReference type="InterPro" id="IPR004027">
    <property type="entry name" value="SEC_C_motif"/>
</dbReference>
<dbReference type="InterPro" id="IPR000185">
    <property type="entry name" value="SecA"/>
</dbReference>
<dbReference type="InterPro" id="IPR020937">
    <property type="entry name" value="SecA_CS"/>
</dbReference>
<dbReference type="InterPro" id="IPR011115">
    <property type="entry name" value="SecA_DEAD"/>
</dbReference>
<dbReference type="InterPro" id="IPR014018">
    <property type="entry name" value="SecA_motor_DEAD"/>
</dbReference>
<dbReference type="InterPro" id="IPR011130">
    <property type="entry name" value="SecA_preprotein_X-link_dom"/>
</dbReference>
<dbReference type="InterPro" id="IPR044722">
    <property type="entry name" value="SecA_SF2_C"/>
</dbReference>
<dbReference type="InterPro" id="IPR011116">
    <property type="entry name" value="SecA_Wing/Scaffold"/>
</dbReference>
<dbReference type="InterPro" id="IPR036266">
    <property type="entry name" value="SecA_Wing/Scaffold_sf"/>
</dbReference>
<dbReference type="InterPro" id="IPR036670">
    <property type="entry name" value="SecA_X-link_sf"/>
</dbReference>
<dbReference type="NCBIfam" id="NF009538">
    <property type="entry name" value="PRK12904.1"/>
    <property type="match status" value="1"/>
</dbReference>
<dbReference type="NCBIfam" id="TIGR00963">
    <property type="entry name" value="secA"/>
    <property type="match status" value="1"/>
</dbReference>
<dbReference type="PANTHER" id="PTHR30612:SF0">
    <property type="entry name" value="CHLOROPLAST PROTEIN-TRANSPORTING ATPASE"/>
    <property type="match status" value="1"/>
</dbReference>
<dbReference type="PANTHER" id="PTHR30612">
    <property type="entry name" value="SECA INNER MEMBRANE COMPONENT OF SEC PROTEIN SECRETION SYSTEM"/>
    <property type="match status" value="1"/>
</dbReference>
<dbReference type="Pfam" id="PF21090">
    <property type="entry name" value="P-loop_SecA"/>
    <property type="match status" value="1"/>
</dbReference>
<dbReference type="Pfam" id="PF02810">
    <property type="entry name" value="SEC-C"/>
    <property type="match status" value="1"/>
</dbReference>
<dbReference type="Pfam" id="PF07517">
    <property type="entry name" value="SecA_DEAD"/>
    <property type="match status" value="1"/>
</dbReference>
<dbReference type="Pfam" id="PF01043">
    <property type="entry name" value="SecA_PP_bind"/>
    <property type="match status" value="1"/>
</dbReference>
<dbReference type="Pfam" id="PF07516">
    <property type="entry name" value="SecA_SW"/>
    <property type="match status" value="1"/>
</dbReference>
<dbReference type="PRINTS" id="PR00906">
    <property type="entry name" value="SECA"/>
</dbReference>
<dbReference type="SMART" id="SM00957">
    <property type="entry name" value="SecA_DEAD"/>
    <property type="match status" value="1"/>
</dbReference>
<dbReference type="SMART" id="SM00958">
    <property type="entry name" value="SecA_PP_bind"/>
    <property type="match status" value="1"/>
</dbReference>
<dbReference type="SUPFAM" id="SSF81886">
    <property type="entry name" value="Helical scaffold and wing domains of SecA"/>
    <property type="match status" value="1"/>
</dbReference>
<dbReference type="SUPFAM" id="SSF52540">
    <property type="entry name" value="P-loop containing nucleoside triphosphate hydrolases"/>
    <property type="match status" value="2"/>
</dbReference>
<dbReference type="SUPFAM" id="SSF81767">
    <property type="entry name" value="Pre-protein crosslinking domain of SecA"/>
    <property type="match status" value="1"/>
</dbReference>
<dbReference type="PROSITE" id="PS01312">
    <property type="entry name" value="SECA"/>
    <property type="match status" value="1"/>
</dbReference>
<dbReference type="PROSITE" id="PS51196">
    <property type="entry name" value="SECA_MOTOR_DEAD"/>
    <property type="match status" value="1"/>
</dbReference>
<comment type="function">
    <text evidence="1">Part of the Sec protein translocase complex. Interacts with the SecYEG preprotein conducting channel. Has a central role in coupling the hydrolysis of ATP to the transfer of proteins into and across the cell membrane, serving as an ATP-driven molecular motor driving the stepwise translocation of polypeptide chains across the membrane.</text>
</comment>
<comment type="catalytic activity">
    <reaction evidence="1">
        <text>ATP + H2O + cellular proteinSide 1 = ADP + phosphate + cellular proteinSide 2.</text>
        <dbReference type="EC" id="7.4.2.8"/>
    </reaction>
</comment>
<comment type="cofactor">
    <cofactor evidence="1">
        <name>Zn(2+)</name>
        <dbReference type="ChEBI" id="CHEBI:29105"/>
    </cofactor>
    <text evidence="1">May bind 1 zinc ion per subunit.</text>
</comment>
<comment type="subunit">
    <text evidence="1">Monomer and homodimer. Part of the essential Sec protein translocation apparatus which comprises SecA, SecYEG and auxiliary proteins SecDF. Other proteins may also be involved.</text>
</comment>
<comment type="subcellular location">
    <subcellularLocation>
        <location evidence="1">Cell membrane</location>
        <topology evidence="1">Peripheral membrane protein</topology>
        <orientation evidence="1">Cytoplasmic side</orientation>
    </subcellularLocation>
    <subcellularLocation>
        <location evidence="1">Cytoplasm</location>
    </subcellularLocation>
    <text evidence="1">Distribution is 50-50.</text>
</comment>
<comment type="similarity">
    <text evidence="1">Belongs to the SecA family.</text>
</comment>
<keyword id="KW-0067">ATP-binding</keyword>
<keyword id="KW-1003">Cell membrane</keyword>
<keyword id="KW-0963">Cytoplasm</keyword>
<keyword id="KW-0472">Membrane</keyword>
<keyword id="KW-0479">Metal-binding</keyword>
<keyword id="KW-0547">Nucleotide-binding</keyword>
<keyword id="KW-0653">Protein transport</keyword>
<keyword id="KW-1185">Reference proteome</keyword>
<keyword id="KW-1278">Translocase</keyword>
<keyword id="KW-0811">Translocation</keyword>
<keyword id="KW-0813">Transport</keyword>
<keyword id="KW-0862">Zinc</keyword>
<name>SECA_DESRM</name>
<protein>
    <recommendedName>
        <fullName evidence="1">Protein translocase subunit SecA</fullName>
        <ecNumber evidence="1">7.4.2.8</ecNumber>
    </recommendedName>
</protein>
<reference key="1">
    <citation type="submission" date="2007-03" db="EMBL/GenBank/DDBJ databases">
        <title>Complete sequence of Desulfotomaculum reducens MI-1.</title>
        <authorList>
            <consortium name="US DOE Joint Genome Institute"/>
            <person name="Copeland A."/>
            <person name="Lucas S."/>
            <person name="Lapidus A."/>
            <person name="Barry K."/>
            <person name="Detter J.C."/>
            <person name="Glavina del Rio T."/>
            <person name="Hammon N."/>
            <person name="Israni S."/>
            <person name="Dalin E."/>
            <person name="Tice H."/>
            <person name="Pitluck S."/>
            <person name="Sims D."/>
            <person name="Brettin T."/>
            <person name="Bruce D."/>
            <person name="Han C."/>
            <person name="Tapia R."/>
            <person name="Schmutz J."/>
            <person name="Larimer F."/>
            <person name="Land M."/>
            <person name="Hauser L."/>
            <person name="Kyrpides N."/>
            <person name="Kim E."/>
            <person name="Tebo B.M."/>
            <person name="Richardson P."/>
        </authorList>
    </citation>
    <scope>NUCLEOTIDE SEQUENCE [LARGE SCALE GENOMIC DNA]</scope>
    <source>
        <strain>ATCC BAA-1160 / DSM 100696 / MI-1</strain>
    </source>
</reference>
<organism>
    <name type="scientific">Desulforamulus reducens (strain ATCC BAA-1160 / DSM 100696 / MI-1)</name>
    <name type="common">Desulfotomaculum reducens</name>
    <dbReference type="NCBI Taxonomy" id="349161"/>
    <lineage>
        <taxon>Bacteria</taxon>
        <taxon>Bacillati</taxon>
        <taxon>Bacillota</taxon>
        <taxon>Clostridia</taxon>
        <taxon>Eubacteriales</taxon>
        <taxon>Peptococcaceae</taxon>
        <taxon>Desulforamulus</taxon>
    </lineage>
</organism>